<sequence>MEGADLLTAGVLFLFAAVAAVPLAARLGIGAVLGYLLAGIAIGPWGLGFISDVDEILHFSELGVVFLMFIIGLELNPSRLWQLRRSIFGVGAAQVLLSAAVLAGLLMLADFLWQAAVVGGIGLAMSSTAMALQLMREKGMNRSESGQLGFSVLLFQDLAVIPALALVPLLAGSADEHFDWFKVAMKVLAFAVMLIGGRYLLRPVFRFIAASGVREVFTAATLLLVLSAALFMDALGLSMALGTFIAGVLLAESEYRHELENAIDPFKGLLLGLFFISVGMSLNLGVLYTHLLWVAASVVILVVIKMLTLYLLARLYGIRSSERMQFASVLSQGGEFAFVLFSTASSQRLFQGDQMALLLVTVTLSMMTTPLLMKGIDKWLSRRLNGPEENDEKPWVEDDKPQVIVVGFGRFGQVIARLLMANKMRITVLERDIGAVNLMRKYGYKVYYGDATQVELLRSAGAEAAESIVITCNEPEDTMKLVELCQQHFPHLHILARARGRVEAHELLQAGVTQFSRETFSSALELGRKTLVSLGMHPHQAQRAQLHFRRLDMRMLRELIPEHSDMVQISRAREARRELEEIFQREMQQERRQLDGWDEFE</sequence>
<dbReference type="EMBL" id="AM933172">
    <property type="protein sequence ID" value="CAR34860.1"/>
    <property type="molecule type" value="Genomic_DNA"/>
</dbReference>
<dbReference type="RefSeq" id="WP_000398135.1">
    <property type="nucleotide sequence ID" value="NC_011294.1"/>
</dbReference>
<dbReference type="SMR" id="B5R2A8"/>
<dbReference type="KEGG" id="set:SEN3285"/>
<dbReference type="HOGENOM" id="CLU_005126_9_3_6"/>
<dbReference type="Proteomes" id="UP000000613">
    <property type="component" value="Chromosome"/>
</dbReference>
<dbReference type="GO" id="GO:0005886">
    <property type="term" value="C:plasma membrane"/>
    <property type="evidence" value="ECO:0007669"/>
    <property type="project" value="UniProtKB-SubCell"/>
</dbReference>
<dbReference type="GO" id="GO:0015503">
    <property type="term" value="F:glutathione-regulated potassium exporter activity"/>
    <property type="evidence" value="ECO:0007669"/>
    <property type="project" value="UniProtKB-UniRule"/>
</dbReference>
<dbReference type="GO" id="GO:1902600">
    <property type="term" value="P:proton transmembrane transport"/>
    <property type="evidence" value="ECO:0007669"/>
    <property type="project" value="InterPro"/>
</dbReference>
<dbReference type="FunFam" id="1.20.1530.20:FF:000001">
    <property type="entry name" value="Glutathione-regulated potassium-efflux system protein KefB"/>
    <property type="match status" value="1"/>
</dbReference>
<dbReference type="FunFam" id="3.40.50.720:FF:000036">
    <property type="entry name" value="Glutathione-regulated potassium-efflux system protein KefB"/>
    <property type="match status" value="1"/>
</dbReference>
<dbReference type="Gene3D" id="1.20.1530.20">
    <property type="match status" value="1"/>
</dbReference>
<dbReference type="Gene3D" id="3.40.50.720">
    <property type="entry name" value="NAD(P)-binding Rossmann-like Domain"/>
    <property type="match status" value="1"/>
</dbReference>
<dbReference type="HAMAP" id="MF_01412">
    <property type="entry name" value="K_H_efflux_KefB"/>
    <property type="match status" value="1"/>
</dbReference>
<dbReference type="InterPro" id="IPR006153">
    <property type="entry name" value="Cation/H_exchanger_TM"/>
</dbReference>
<dbReference type="InterPro" id="IPR004771">
    <property type="entry name" value="K/H_exchanger"/>
</dbReference>
<dbReference type="InterPro" id="IPR020884">
    <property type="entry name" value="K_H_efflux_KefB"/>
</dbReference>
<dbReference type="InterPro" id="IPR006036">
    <property type="entry name" value="K_uptake_TrkA"/>
</dbReference>
<dbReference type="InterPro" id="IPR038770">
    <property type="entry name" value="Na+/solute_symporter_sf"/>
</dbReference>
<dbReference type="InterPro" id="IPR036291">
    <property type="entry name" value="NAD(P)-bd_dom_sf"/>
</dbReference>
<dbReference type="InterPro" id="IPR003148">
    <property type="entry name" value="RCK_N"/>
</dbReference>
<dbReference type="NCBIfam" id="TIGR00932">
    <property type="entry name" value="2a37"/>
    <property type="match status" value="1"/>
</dbReference>
<dbReference type="NCBIfam" id="NF002973">
    <property type="entry name" value="PRK03659.1"/>
    <property type="match status" value="1"/>
</dbReference>
<dbReference type="PANTHER" id="PTHR46157">
    <property type="entry name" value="K(+) EFFLUX ANTIPORTER 3, CHLOROPLASTIC"/>
    <property type="match status" value="1"/>
</dbReference>
<dbReference type="PANTHER" id="PTHR46157:SF4">
    <property type="entry name" value="K(+) EFFLUX ANTIPORTER 3, CHLOROPLASTIC"/>
    <property type="match status" value="1"/>
</dbReference>
<dbReference type="Pfam" id="PF00999">
    <property type="entry name" value="Na_H_Exchanger"/>
    <property type="match status" value="1"/>
</dbReference>
<dbReference type="Pfam" id="PF02254">
    <property type="entry name" value="TrkA_N"/>
    <property type="match status" value="1"/>
</dbReference>
<dbReference type="PRINTS" id="PR00335">
    <property type="entry name" value="KUPTAKETRKA"/>
</dbReference>
<dbReference type="SUPFAM" id="SSF51735">
    <property type="entry name" value="NAD(P)-binding Rossmann-fold domains"/>
    <property type="match status" value="1"/>
</dbReference>
<dbReference type="PROSITE" id="PS51201">
    <property type="entry name" value="RCK_N"/>
    <property type="match status" value="1"/>
</dbReference>
<keyword id="KW-0050">Antiport</keyword>
<keyword id="KW-0997">Cell inner membrane</keyword>
<keyword id="KW-1003">Cell membrane</keyword>
<keyword id="KW-0406">Ion transport</keyword>
<keyword id="KW-0472">Membrane</keyword>
<keyword id="KW-0630">Potassium</keyword>
<keyword id="KW-0633">Potassium transport</keyword>
<keyword id="KW-0812">Transmembrane</keyword>
<keyword id="KW-1133">Transmembrane helix</keyword>
<keyword id="KW-0813">Transport</keyword>
<name>KEFB_SALEP</name>
<organism>
    <name type="scientific">Salmonella enteritidis PT4 (strain P125109)</name>
    <dbReference type="NCBI Taxonomy" id="550537"/>
    <lineage>
        <taxon>Bacteria</taxon>
        <taxon>Pseudomonadati</taxon>
        <taxon>Pseudomonadota</taxon>
        <taxon>Gammaproteobacteria</taxon>
        <taxon>Enterobacterales</taxon>
        <taxon>Enterobacteriaceae</taxon>
        <taxon>Salmonella</taxon>
    </lineage>
</organism>
<reference key="1">
    <citation type="journal article" date="2008" name="Genome Res.">
        <title>Comparative genome analysis of Salmonella enteritidis PT4 and Salmonella gallinarum 287/91 provides insights into evolutionary and host adaptation pathways.</title>
        <authorList>
            <person name="Thomson N.R."/>
            <person name="Clayton D.J."/>
            <person name="Windhorst D."/>
            <person name="Vernikos G."/>
            <person name="Davidson S."/>
            <person name="Churcher C."/>
            <person name="Quail M.A."/>
            <person name="Stevens M."/>
            <person name="Jones M.A."/>
            <person name="Watson M."/>
            <person name="Barron A."/>
            <person name="Layton A."/>
            <person name="Pickard D."/>
            <person name="Kingsley R.A."/>
            <person name="Bignell A."/>
            <person name="Clark L."/>
            <person name="Harris B."/>
            <person name="Ormond D."/>
            <person name="Abdellah Z."/>
            <person name="Brooks K."/>
            <person name="Cherevach I."/>
            <person name="Chillingworth T."/>
            <person name="Woodward J."/>
            <person name="Norberczak H."/>
            <person name="Lord A."/>
            <person name="Arrowsmith C."/>
            <person name="Jagels K."/>
            <person name="Moule S."/>
            <person name="Mungall K."/>
            <person name="Saunders M."/>
            <person name="Whitehead S."/>
            <person name="Chabalgoity J.A."/>
            <person name="Maskell D."/>
            <person name="Humphreys T."/>
            <person name="Roberts M."/>
            <person name="Barrow P.A."/>
            <person name="Dougan G."/>
            <person name="Parkhill J."/>
        </authorList>
    </citation>
    <scope>NUCLEOTIDE SEQUENCE [LARGE SCALE GENOMIC DNA]</scope>
    <source>
        <strain>P125109</strain>
    </source>
</reference>
<protein>
    <recommendedName>
        <fullName evidence="1">Glutathione-regulated potassium-efflux system protein KefB</fullName>
    </recommendedName>
    <alternativeName>
        <fullName evidence="1">K(+)/H(+) antiporter</fullName>
    </alternativeName>
</protein>
<evidence type="ECO:0000255" key="1">
    <source>
        <dbReference type="HAMAP-Rule" id="MF_01412"/>
    </source>
</evidence>
<evidence type="ECO:0000255" key="2">
    <source>
        <dbReference type="PROSITE-ProRule" id="PRU00543"/>
    </source>
</evidence>
<comment type="function">
    <text evidence="1">Pore-forming subunit of a potassium efflux system that confers protection against electrophiles. Catalyzes K(+)/H(+) antiport.</text>
</comment>
<comment type="subunit">
    <text evidence="1">Interacts with the regulatory subunit KefG.</text>
</comment>
<comment type="subcellular location">
    <subcellularLocation>
        <location evidence="1">Cell inner membrane</location>
        <topology evidence="1">Multi-pass membrane protein</topology>
    </subcellularLocation>
</comment>
<comment type="similarity">
    <text evidence="1">Belongs to the monovalent cation:proton antiporter 2 (CPA2) transporter (TC 2.A.37) family. KefB subfamily.</text>
</comment>
<proteinExistence type="inferred from homology"/>
<accession>B5R2A8</accession>
<feature type="chain" id="PRO_1000145527" description="Glutathione-regulated potassium-efflux system protein KefB">
    <location>
        <begin position="1"/>
        <end position="601"/>
    </location>
</feature>
<feature type="transmembrane region" description="Helical" evidence="1">
    <location>
        <begin position="4"/>
        <end position="24"/>
    </location>
</feature>
<feature type="transmembrane region" description="Helical" evidence="1">
    <location>
        <begin position="29"/>
        <end position="49"/>
    </location>
</feature>
<feature type="transmembrane region" description="Helical" evidence="1">
    <location>
        <begin position="55"/>
        <end position="75"/>
    </location>
</feature>
<feature type="transmembrane region" description="Helical" evidence="1">
    <location>
        <begin position="87"/>
        <end position="107"/>
    </location>
</feature>
<feature type="transmembrane region" description="Helical" evidence="1">
    <location>
        <begin position="111"/>
        <end position="131"/>
    </location>
</feature>
<feature type="transmembrane region" description="Helical" evidence="1">
    <location>
        <begin position="152"/>
        <end position="172"/>
    </location>
</feature>
<feature type="transmembrane region" description="Helical" evidence="1">
    <location>
        <begin position="177"/>
        <end position="197"/>
    </location>
</feature>
<feature type="transmembrane region" description="Helical" evidence="1">
    <location>
        <begin position="207"/>
        <end position="227"/>
    </location>
</feature>
<feature type="transmembrane region" description="Helical" evidence="1">
    <location>
        <begin position="230"/>
        <end position="250"/>
    </location>
</feature>
<feature type="transmembrane region" description="Helical" evidence="1">
    <location>
        <begin position="262"/>
        <end position="282"/>
    </location>
</feature>
<feature type="transmembrane region" description="Helical" evidence="1">
    <location>
        <begin position="284"/>
        <end position="304"/>
    </location>
</feature>
<feature type="transmembrane region" description="Helical" evidence="1">
    <location>
        <begin position="324"/>
        <end position="344"/>
    </location>
</feature>
<feature type="transmembrane region" description="Helical" evidence="1">
    <location>
        <begin position="356"/>
        <end position="376"/>
    </location>
</feature>
<feature type="domain" description="RCK N-terminal" evidence="2">
    <location>
        <begin position="400"/>
        <end position="519"/>
    </location>
</feature>
<gene>
    <name evidence="1" type="primary">kefB</name>
    <name type="ordered locus">SEN3285</name>
</gene>